<protein>
    <recommendedName>
        <fullName evidence="2">D-galactonate dehydratase</fullName>
        <shortName evidence="2">GalD</shortName>
        <ecNumber evidence="2">4.2.1.6</ecNumber>
    </recommendedName>
</protein>
<dbReference type="EC" id="4.2.1.6" evidence="2"/>
<dbReference type="EMBL" id="CU928162">
    <property type="protein sequence ID" value="CAR10367.1"/>
    <property type="molecule type" value="Genomic_DNA"/>
</dbReference>
<dbReference type="RefSeq" id="WP_000705012.1">
    <property type="nucleotide sequence ID" value="NC_011745.1"/>
</dbReference>
<dbReference type="SMR" id="B7N1Z6"/>
<dbReference type="GeneID" id="89518589"/>
<dbReference type="KEGG" id="ecq:ECED1_4383"/>
<dbReference type="HOGENOM" id="CLU_030273_3_2_6"/>
<dbReference type="UniPathway" id="UPA00081">
    <property type="reaction ID" value="UER00518"/>
</dbReference>
<dbReference type="Proteomes" id="UP000000748">
    <property type="component" value="Chromosome"/>
</dbReference>
<dbReference type="GO" id="GO:0008869">
    <property type="term" value="F:galactonate dehydratase activity"/>
    <property type="evidence" value="ECO:0007669"/>
    <property type="project" value="UniProtKB-UniRule"/>
</dbReference>
<dbReference type="GO" id="GO:0000287">
    <property type="term" value="F:magnesium ion binding"/>
    <property type="evidence" value="ECO:0007669"/>
    <property type="project" value="UniProtKB-UniRule"/>
</dbReference>
<dbReference type="GO" id="GO:0009063">
    <property type="term" value="P:amino acid catabolic process"/>
    <property type="evidence" value="ECO:0007669"/>
    <property type="project" value="InterPro"/>
</dbReference>
<dbReference type="GO" id="GO:0034194">
    <property type="term" value="P:D-galactonate catabolic process"/>
    <property type="evidence" value="ECO:0007669"/>
    <property type="project" value="UniProtKB-UniRule"/>
</dbReference>
<dbReference type="CDD" id="cd03325">
    <property type="entry name" value="D-galactonate_dehydratase"/>
    <property type="match status" value="1"/>
</dbReference>
<dbReference type="FunFam" id="3.20.20.120:FF:000008">
    <property type="entry name" value="D-galactonate dehydratase"/>
    <property type="match status" value="1"/>
</dbReference>
<dbReference type="FunFam" id="3.30.390.10:FF:000003">
    <property type="entry name" value="D-galactonate dehydratase"/>
    <property type="match status" value="1"/>
</dbReference>
<dbReference type="Gene3D" id="3.20.20.120">
    <property type="entry name" value="Enolase-like C-terminal domain"/>
    <property type="match status" value="1"/>
</dbReference>
<dbReference type="Gene3D" id="3.30.390.10">
    <property type="entry name" value="Enolase-like, N-terminal domain"/>
    <property type="match status" value="1"/>
</dbReference>
<dbReference type="HAMAP" id="MF_01289">
    <property type="entry name" value="Galacton_dehydrat"/>
    <property type="match status" value="1"/>
</dbReference>
<dbReference type="InterPro" id="IPR034593">
    <property type="entry name" value="DgoD-like"/>
</dbReference>
<dbReference type="InterPro" id="IPR036849">
    <property type="entry name" value="Enolase-like_C_sf"/>
</dbReference>
<dbReference type="InterPro" id="IPR029017">
    <property type="entry name" value="Enolase-like_N"/>
</dbReference>
<dbReference type="InterPro" id="IPR029065">
    <property type="entry name" value="Enolase_C-like"/>
</dbReference>
<dbReference type="InterPro" id="IPR023592">
    <property type="entry name" value="Galactonate_deHydtase"/>
</dbReference>
<dbReference type="InterPro" id="IPR018110">
    <property type="entry name" value="Mandel_Rmase/mucon_lact_enz_CS"/>
</dbReference>
<dbReference type="InterPro" id="IPR013342">
    <property type="entry name" value="Mandelate_racemase_C"/>
</dbReference>
<dbReference type="InterPro" id="IPR013341">
    <property type="entry name" value="Mandelate_racemase_N_dom"/>
</dbReference>
<dbReference type="NCBIfam" id="NF010624">
    <property type="entry name" value="PRK14017.1"/>
    <property type="match status" value="1"/>
</dbReference>
<dbReference type="PANTHER" id="PTHR48080:SF2">
    <property type="entry name" value="D-GALACTONATE DEHYDRATASE"/>
    <property type="match status" value="1"/>
</dbReference>
<dbReference type="PANTHER" id="PTHR48080">
    <property type="entry name" value="D-GALACTONATE DEHYDRATASE-RELATED"/>
    <property type="match status" value="1"/>
</dbReference>
<dbReference type="Pfam" id="PF13378">
    <property type="entry name" value="MR_MLE_C"/>
    <property type="match status" value="1"/>
</dbReference>
<dbReference type="Pfam" id="PF02746">
    <property type="entry name" value="MR_MLE_N"/>
    <property type="match status" value="1"/>
</dbReference>
<dbReference type="SFLD" id="SFLDF00003">
    <property type="entry name" value="D-galactonate_dehydratase"/>
    <property type="match status" value="1"/>
</dbReference>
<dbReference type="SFLD" id="SFLDG00179">
    <property type="entry name" value="mandelate_racemase"/>
    <property type="match status" value="1"/>
</dbReference>
<dbReference type="SMART" id="SM00922">
    <property type="entry name" value="MR_MLE"/>
    <property type="match status" value="1"/>
</dbReference>
<dbReference type="SUPFAM" id="SSF51604">
    <property type="entry name" value="Enolase C-terminal domain-like"/>
    <property type="match status" value="1"/>
</dbReference>
<dbReference type="SUPFAM" id="SSF54826">
    <property type="entry name" value="Enolase N-terminal domain-like"/>
    <property type="match status" value="1"/>
</dbReference>
<dbReference type="PROSITE" id="PS00908">
    <property type="entry name" value="MR_MLE_1"/>
    <property type="match status" value="1"/>
</dbReference>
<dbReference type="PROSITE" id="PS00909">
    <property type="entry name" value="MR_MLE_2"/>
    <property type="match status" value="1"/>
</dbReference>
<organism>
    <name type="scientific">Escherichia coli O81 (strain ED1a)</name>
    <dbReference type="NCBI Taxonomy" id="585397"/>
    <lineage>
        <taxon>Bacteria</taxon>
        <taxon>Pseudomonadati</taxon>
        <taxon>Pseudomonadota</taxon>
        <taxon>Gammaproteobacteria</taxon>
        <taxon>Enterobacterales</taxon>
        <taxon>Enterobacteriaceae</taxon>
        <taxon>Escherichia</taxon>
    </lineage>
</organism>
<evidence type="ECO:0000250" key="1"/>
<evidence type="ECO:0000255" key="2">
    <source>
        <dbReference type="HAMAP-Rule" id="MF_01289"/>
    </source>
</evidence>
<gene>
    <name evidence="2" type="primary">dgoD</name>
    <name type="ordered locus">ECED1_4383</name>
</gene>
<proteinExistence type="inferred from homology"/>
<sequence length="382" mass="42553">MKITKITTYRLPPRWMFLKIETDEGVVGWGEPVIEGRARTVEAAVHELSDYLIGQDPSRINDLWQVMYRAGFYRGGPILMSAIAGIDQALWDIKGKVLNAPVWQLMGGLVRDKIKAYSWVGGDRPADVIDGIKTLREIGFDTFKLNGCEELGLIDNSRAVDAAVNTVAQIREAFGNQIEFGLDFHGRVSAPMAKVLIKELEPYRPLFIEEPVLAEQAEYYPKLAAQTHIPLAAGERMFSRFDFKRVLEAGGISILQPDLSHAGGITECYKIAGMAEAYDVTLAPHCPLGPIALAACLHIDFVSYNAVLQEQSMGIHYNKGAELLDFVKNKEDFSMVGGFFKPLTKPGLGVEIDEAKVIEFSKNAPDWRNPLWRHEDNSVAEW</sequence>
<keyword id="KW-0456">Lyase</keyword>
<keyword id="KW-0460">Magnesium</keyword>
<keyword id="KW-0479">Metal-binding</keyword>
<accession>B7N1Z6</accession>
<name>DGOD_ECO81</name>
<feature type="chain" id="PRO_1000165269" description="D-galactonate dehydratase">
    <location>
        <begin position="1"/>
        <end position="382"/>
    </location>
</feature>
<feature type="active site" description="Proton donor" evidence="1">
    <location>
        <position position="185"/>
    </location>
</feature>
<feature type="active site" description="Proton acceptor" evidence="1">
    <location>
        <position position="285"/>
    </location>
</feature>
<feature type="binding site" evidence="2">
    <location>
        <position position="183"/>
    </location>
    <ligand>
        <name>Mg(2+)</name>
        <dbReference type="ChEBI" id="CHEBI:18420"/>
    </ligand>
</feature>
<feature type="binding site" evidence="2">
    <location>
        <position position="209"/>
    </location>
    <ligand>
        <name>Mg(2+)</name>
        <dbReference type="ChEBI" id="CHEBI:18420"/>
    </ligand>
</feature>
<feature type="binding site" evidence="2">
    <location>
        <position position="235"/>
    </location>
    <ligand>
        <name>Mg(2+)</name>
        <dbReference type="ChEBI" id="CHEBI:18420"/>
    </ligand>
</feature>
<feature type="site" description="Increases basicity of active site His" evidence="2">
    <location>
        <position position="258"/>
    </location>
</feature>
<feature type="site" description="Transition state stabilizer" evidence="2">
    <location>
        <position position="310"/>
    </location>
</feature>
<comment type="function">
    <text evidence="2">Catalyzes the dehydration of D-galactonate to 2-keto-3-deoxy-D-galactonate.</text>
</comment>
<comment type="catalytic activity">
    <reaction evidence="2">
        <text>D-galactonate = 2-dehydro-3-deoxy-D-galactonate + H2O</text>
        <dbReference type="Rhea" id="RHEA:18649"/>
        <dbReference type="ChEBI" id="CHEBI:12931"/>
        <dbReference type="ChEBI" id="CHEBI:15377"/>
        <dbReference type="ChEBI" id="CHEBI:57989"/>
        <dbReference type="EC" id="4.2.1.6"/>
    </reaction>
</comment>
<comment type="cofactor">
    <cofactor evidence="2">
        <name>Mg(2+)</name>
        <dbReference type="ChEBI" id="CHEBI:18420"/>
    </cofactor>
    <text evidence="2">Binds 1 Mg(2+) ion per subunit.</text>
</comment>
<comment type="pathway">
    <text evidence="2">Carbohydrate acid metabolism; D-galactonate degradation; D-glyceraldehyde 3-phosphate and pyruvate from D-galactonate: step 1/3.</text>
</comment>
<comment type="miscellaneous">
    <text evidence="2">Reaction proceeds via an anti dehydration.</text>
</comment>
<comment type="similarity">
    <text evidence="2">Belongs to the mandelate racemase/muconate lactonizing enzyme family. GalD subfamily.</text>
</comment>
<reference key="1">
    <citation type="journal article" date="2009" name="PLoS Genet.">
        <title>Organised genome dynamics in the Escherichia coli species results in highly diverse adaptive paths.</title>
        <authorList>
            <person name="Touchon M."/>
            <person name="Hoede C."/>
            <person name="Tenaillon O."/>
            <person name="Barbe V."/>
            <person name="Baeriswyl S."/>
            <person name="Bidet P."/>
            <person name="Bingen E."/>
            <person name="Bonacorsi S."/>
            <person name="Bouchier C."/>
            <person name="Bouvet O."/>
            <person name="Calteau A."/>
            <person name="Chiapello H."/>
            <person name="Clermont O."/>
            <person name="Cruveiller S."/>
            <person name="Danchin A."/>
            <person name="Diard M."/>
            <person name="Dossat C."/>
            <person name="Karoui M.E."/>
            <person name="Frapy E."/>
            <person name="Garry L."/>
            <person name="Ghigo J.M."/>
            <person name="Gilles A.M."/>
            <person name="Johnson J."/>
            <person name="Le Bouguenec C."/>
            <person name="Lescat M."/>
            <person name="Mangenot S."/>
            <person name="Martinez-Jehanne V."/>
            <person name="Matic I."/>
            <person name="Nassif X."/>
            <person name="Oztas S."/>
            <person name="Petit M.A."/>
            <person name="Pichon C."/>
            <person name="Rouy Z."/>
            <person name="Ruf C.S."/>
            <person name="Schneider D."/>
            <person name="Tourret J."/>
            <person name="Vacherie B."/>
            <person name="Vallenet D."/>
            <person name="Medigue C."/>
            <person name="Rocha E.P.C."/>
            <person name="Denamur E."/>
        </authorList>
    </citation>
    <scope>NUCLEOTIDE SEQUENCE [LARGE SCALE GENOMIC DNA]</scope>
    <source>
        <strain>ED1a</strain>
    </source>
</reference>